<keyword id="KW-0025">Alternative splicing</keyword>
<keyword id="KW-1267">Proteomics identification</keyword>
<keyword id="KW-1185">Reference proteome</keyword>
<sequence length="195" mass="22522">MAQEKMKLGFKSLPSSTTADGNILRRVNSAPLINGLGFNSQVLQADMLRIRTNRTTFRNRRSLLLPPPPFHGSISRLHQIKQEEAMDLINRETMSEWKLQSEIQISHSWEEGLKLVKWHFNINQKRFSKAQPTCFLLILPNCQKIMCIYFQLLLMETTAMLDLLVIRQLKSALSQTLLCHLLILVLICSSRQTFN</sequence>
<reference key="1">
    <citation type="journal article" date="2004" name="Nat. Genet.">
        <title>Complete sequencing and characterization of 21,243 full-length human cDNAs.</title>
        <authorList>
            <person name="Ota T."/>
            <person name="Suzuki Y."/>
            <person name="Nishikawa T."/>
            <person name="Otsuki T."/>
            <person name="Sugiyama T."/>
            <person name="Irie R."/>
            <person name="Wakamatsu A."/>
            <person name="Hayashi K."/>
            <person name="Sato H."/>
            <person name="Nagai K."/>
            <person name="Kimura K."/>
            <person name="Makita H."/>
            <person name="Sekine M."/>
            <person name="Obayashi M."/>
            <person name="Nishi T."/>
            <person name="Shibahara T."/>
            <person name="Tanaka T."/>
            <person name="Ishii S."/>
            <person name="Yamamoto J."/>
            <person name="Saito K."/>
            <person name="Kawai Y."/>
            <person name="Isono Y."/>
            <person name="Nakamura Y."/>
            <person name="Nagahari K."/>
            <person name="Murakami K."/>
            <person name="Yasuda T."/>
            <person name="Iwayanagi T."/>
            <person name="Wagatsuma M."/>
            <person name="Shiratori A."/>
            <person name="Sudo H."/>
            <person name="Hosoiri T."/>
            <person name="Kaku Y."/>
            <person name="Kodaira H."/>
            <person name="Kondo H."/>
            <person name="Sugawara M."/>
            <person name="Takahashi M."/>
            <person name="Kanda K."/>
            <person name="Yokoi T."/>
            <person name="Furuya T."/>
            <person name="Kikkawa E."/>
            <person name="Omura Y."/>
            <person name="Abe K."/>
            <person name="Kamihara K."/>
            <person name="Katsuta N."/>
            <person name="Sato K."/>
            <person name="Tanikawa M."/>
            <person name="Yamazaki M."/>
            <person name="Ninomiya K."/>
            <person name="Ishibashi T."/>
            <person name="Yamashita H."/>
            <person name="Murakawa K."/>
            <person name="Fujimori K."/>
            <person name="Tanai H."/>
            <person name="Kimata M."/>
            <person name="Watanabe M."/>
            <person name="Hiraoka S."/>
            <person name="Chiba Y."/>
            <person name="Ishida S."/>
            <person name="Ono Y."/>
            <person name="Takiguchi S."/>
            <person name="Watanabe S."/>
            <person name="Yosida M."/>
            <person name="Hotuta T."/>
            <person name="Kusano J."/>
            <person name="Kanehori K."/>
            <person name="Takahashi-Fujii A."/>
            <person name="Hara H."/>
            <person name="Tanase T.-O."/>
            <person name="Nomura Y."/>
            <person name="Togiya S."/>
            <person name="Komai F."/>
            <person name="Hara R."/>
            <person name="Takeuchi K."/>
            <person name="Arita M."/>
            <person name="Imose N."/>
            <person name="Musashino K."/>
            <person name="Yuuki H."/>
            <person name="Oshima A."/>
            <person name="Sasaki N."/>
            <person name="Aotsuka S."/>
            <person name="Yoshikawa Y."/>
            <person name="Matsunawa H."/>
            <person name="Ichihara T."/>
            <person name="Shiohata N."/>
            <person name="Sano S."/>
            <person name="Moriya S."/>
            <person name="Momiyama H."/>
            <person name="Satoh N."/>
            <person name="Takami S."/>
            <person name="Terashima Y."/>
            <person name="Suzuki O."/>
            <person name="Nakagawa S."/>
            <person name="Senoh A."/>
            <person name="Mizoguchi H."/>
            <person name="Goto Y."/>
            <person name="Shimizu F."/>
            <person name="Wakebe H."/>
            <person name="Hishigaki H."/>
            <person name="Watanabe T."/>
            <person name="Sugiyama A."/>
            <person name="Takemoto M."/>
            <person name="Kawakami B."/>
            <person name="Yamazaki M."/>
            <person name="Watanabe K."/>
            <person name="Kumagai A."/>
            <person name="Itakura S."/>
            <person name="Fukuzumi Y."/>
            <person name="Fujimori Y."/>
            <person name="Komiyama M."/>
            <person name="Tashiro H."/>
            <person name="Tanigami A."/>
            <person name="Fujiwara T."/>
            <person name="Ono T."/>
            <person name="Yamada K."/>
            <person name="Fujii Y."/>
            <person name="Ozaki K."/>
            <person name="Hirao M."/>
            <person name="Ohmori Y."/>
            <person name="Kawabata A."/>
            <person name="Hikiji T."/>
            <person name="Kobatake N."/>
            <person name="Inagaki H."/>
            <person name="Ikema Y."/>
            <person name="Okamoto S."/>
            <person name="Okitani R."/>
            <person name="Kawakami T."/>
            <person name="Noguchi S."/>
            <person name="Itoh T."/>
            <person name="Shigeta K."/>
            <person name="Senba T."/>
            <person name="Matsumura K."/>
            <person name="Nakajima Y."/>
            <person name="Mizuno T."/>
            <person name="Morinaga M."/>
            <person name="Sasaki M."/>
            <person name="Togashi T."/>
            <person name="Oyama M."/>
            <person name="Hata H."/>
            <person name="Watanabe M."/>
            <person name="Komatsu T."/>
            <person name="Mizushima-Sugano J."/>
            <person name="Satoh T."/>
            <person name="Shirai Y."/>
            <person name="Takahashi Y."/>
            <person name="Nakagawa K."/>
            <person name="Okumura K."/>
            <person name="Nagase T."/>
            <person name="Nomura N."/>
            <person name="Kikuchi H."/>
            <person name="Masuho Y."/>
            <person name="Yamashita R."/>
            <person name="Nakai K."/>
            <person name="Yada T."/>
            <person name="Nakamura Y."/>
            <person name="Ohara O."/>
            <person name="Isogai T."/>
            <person name="Sugano S."/>
        </authorList>
    </citation>
    <scope>NUCLEOTIDE SEQUENCE [LARGE SCALE MRNA] (ISOFORM 3)</scope>
    <source>
        <tissue>Cervix carcinoma</tissue>
    </source>
</reference>
<reference key="2">
    <citation type="journal article" date="2005" name="Nature">
        <title>The DNA sequence of the human X chromosome.</title>
        <authorList>
            <person name="Ross M.T."/>
            <person name="Grafham D.V."/>
            <person name="Coffey A.J."/>
            <person name="Scherer S."/>
            <person name="McLay K."/>
            <person name="Muzny D."/>
            <person name="Platzer M."/>
            <person name="Howell G.R."/>
            <person name="Burrows C."/>
            <person name="Bird C.P."/>
            <person name="Frankish A."/>
            <person name="Lovell F.L."/>
            <person name="Howe K.L."/>
            <person name="Ashurst J.L."/>
            <person name="Fulton R.S."/>
            <person name="Sudbrak R."/>
            <person name="Wen G."/>
            <person name="Jones M.C."/>
            <person name="Hurles M.E."/>
            <person name="Andrews T.D."/>
            <person name="Scott C.E."/>
            <person name="Searle S."/>
            <person name="Ramser J."/>
            <person name="Whittaker A."/>
            <person name="Deadman R."/>
            <person name="Carter N.P."/>
            <person name="Hunt S.E."/>
            <person name="Chen R."/>
            <person name="Cree A."/>
            <person name="Gunaratne P."/>
            <person name="Havlak P."/>
            <person name="Hodgson A."/>
            <person name="Metzker M.L."/>
            <person name="Richards S."/>
            <person name="Scott G."/>
            <person name="Steffen D."/>
            <person name="Sodergren E."/>
            <person name="Wheeler D.A."/>
            <person name="Worley K.C."/>
            <person name="Ainscough R."/>
            <person name="Ambrose K.D."/>
            <person name="Ansari-Lari M.A."/>
            <person name="Aradhya S."/>
            <person name="Ashwell R.I."/>
            <person name="Babbage A.K."/>
            <person name="Bagguley C.L."/>
            <person name="Ballabio A."/>
            <person name="Banerjee R."/>
            <person name="Barker G.E."/>
            <person name="Barlow K.F."/>
            <person name="Barrett I.P."/>
            <person name="Bates K.N."/>
            <person name="Beare D.M."/>
            <person name="Beasley H."/>
            <person name="Beasley O."/>
            <person name="Beck A."/>
            <person name="Bethel G."/>
            <person name="Blechschmidt K."/>
            <person name="Brady N."/>
            <person name="Bray-Allen S."/>
            <person name="Bridgeman A.M."/>
            <person name="Brown A.J."/>
            <person name="Brown M.J."/>
            <person name="Bonnin D."/>
            <person name="Bruford E.A."/>
            <person name="Buhay C."/>
            <person name="Burch P."/>
            <person name="Burford D."/>
            <person name="Burgess J."/>
            <person name="Burrill W."/>
            <person name="Burton J."/>
            <person name="Bye J.M."/>
            <person name="Carder C."/>
            <person name="Carrel L."/>
            <person name="Chako J."/>
            <person name="Chapman J.C."/>
            <person name="Chavez D."/>
            <person name="Chen E."/>
            <person name="Chen G."/>
            <person name="Chen Y."/>
            <person name="Chen Z."/>
            <person name="Chinault C."/>
            <person name="Ciccodicola A."/>
            <person name="Clark S.Y."/>
            <person name="Clarke G."/>
            <person name="Clee C.M."/>
            <person name="Clegg S."/>
            <person name="Clerc-Blankenburg K."/>
            <person name="Clifford K."/>
            <person name="Cobley V."/>
            <person name="Cole C.G."/>
            <person name="Conquer J.S."/>
            <person name="Corby N."/>
            <person name="Connor R.E."/>
            <person name="David R."/>
            <person name="Davies J."/>
            <person name="Davis C."/>
            <person name="Davis J."/>
            <person name="Delgado O."/>
            <person name="Deshazo D."/>
            <person name="Dhami P."/>
            <person name="Ding Y."/>
            <person name="Dinh H."/>
            <person name="Dodsworth S."/>
            <person name="Draper H."/>
            <person name="Dugan-Rocha S."/>
            <person name="Dunham A."/>
            <person name="Dunn M."/>
            <person name="Durbin K.J."/>
            <person name="Dutta I."/>
            <person name="Eades T."/>
            <person name="Ellwood M."/>
            <person name="Emery-Cohen A."/>
            <person name="Errington H."/>
            <person name="Evans K.L."/>
            <person name="Faulkner L."/>
            <person name="Francis F."/>
            <person name="Frankland J."/>
            <person name="Fraser A.E."/>
            <person name="Galgoczy P."/>
            <person name="Gilbert J."/>
            <person name="Gill R."/>
            <person name="Gloeckner G."/>
            <person name="Gregory S.G."/>
            <person name="Gribble S."/>
            <person name="Griffiths C."/>
            <person name="Grocock R."/>
            <person name="Gu Y."/>
            <person name="Gwilliam R."/>
            <person name="Hamilton C."/>
            <person name="Hart E.A."/>
            <person name="Hawes A."/>
            <person name="Heath P.D."/>
            <person name="Heitmann K."/>
            <person name="Hennig S."/>
            <person name="Hernandez J."/>
            <person name="Hinzmann B."/>
            <person name="Ho S."/>
            <person name="Hoffs M."/>
            <person name="Howden P.J."/>
            <person name="Huckle E.J."/>
            <person name="Hume J."/>
            <person name="Hunt P.J."/>
            <person name="Hunt A.R."/>
            <person name="Isherwood J."/>
            <person name="Jacob L."/>
            <person name="Johnson D."/>
            <person name="Jones S."/>
            <person name="de Jong P.J."/>
            <person name="Joseph S.S."/>
            <person name="Keenan S."/>
            <person name="Kelly S."/>
            <person name="Kershaw J.K."/>
            <person name="Khan Z."/>
            <person name="Kioschis P."/>
            <person name="Klages S."/>
            <person name="Knights A.J."/>
            <person name="Kosiura A."/>
            <person name="Kovar-Smith C."/>
            <person name="Laird G.K."/>
            <person name="Langford C."/>
            <person name="Lawlor S."/>
            <person name="Leversha M."/>
            <person name="Lewis L."/>
            <person name="Liu W."/>
            <person name="Lloyd C."/>
            <person name="Lloyd D.M."/>
            <person name="Loulseged H."/>
            <person name="Loveland J.E."/>
            <person name="Lovell J.D."/>
            <person name="Lozado R."/>
            <person name="Lu J."/>
            <person name="Lyne R."/>
            <person name="Ma J."/>
            <person name="Maheshwari M."/>
            <person name="Matthews L.H."/>
            <person name="McDowall J."/>
            <person name="McLaren S."/>
            <person name="McMurray A."/>
            <person name="Meidl P."/>
            <person name="Meitinger T."/>
            <person name="Milne S."/>
            <person name="Miner G."/>
            <person name="Mistry S.L."/>
            <person name="Morgan M."/>
            <person name="Morris S."/>
            <person name="Mueller I."/>
            <person name="Mullikin J.C."/>
            <person name="Nguyen N."/>
            <person name="Nordsiek G."/>
            <person name="Nyakatura G."/>
            <person name="O'dell C.N."/>
            <person name="Okwuonu G."/>
            <person name="Palmer S."/>
            <person name="Pandian R."/>
            <person name="Parker D."/>
            <person name="Parrish J."/>
            <person name="Pasternak S."/>
            <person name="Patel D."/>
            <person name="Pearce A.V."/>
            <person name="Pearson D.M."/>
            <person name="Pelan S.E."/>
            <person name="Perez L."/>
            <person name="Porter K.M."/>
            <person name="Ramsey Y."/>
            <person name="Reichwald K."/>
            <person name="Rhodes S."/>
            <person name="Ridler K.A."/>
            <person name="Schlessinger D."/>
            <person name="Schueler M.G."/>
            <person name="Sehra H.K."/>
            <person name="Shaw-Smith C."/>
            <person name="Shen H."/>
            <person name="Sheridan E.M."/>
            <person name="Shownkeen R."/>
            <person name="Skuce C.D."/>
            <person name="Smith M.L."/>
            <person name="Sotheran E.C."/>
            <person name="Steingruber H.E."/>
            <person name="Steward C.A."/>
            <person name="Storey R."/>
            <person name="Swann R.M."/>
            <person name="Swarbreck D."/>
            <person name="Tabor P.E."/>
            <person name="Taudien S."/>
            <person name="Taylor T."/>
            <person name="Teague B."/>
            <person name="Thomas K."/>
            <person name="Thorpe A."/>
            <person name="Timms K."/>
            <person name="Tracey A."/>
            <person name="Trevanion S."/>
            <person name="Tromans A.C."/>
            <person name="d'Urso M."/>
            <person name="Verduzco D."/>
            <person name="Villasana D."/>
            <person name="Waldron L."/>
            <person name="Wall M."/>
            <person name="Wang Q."/>
            <person name="Warren J."/>
            <person name="Warry G.L."/>
            <person name="Wei X."/>
            <person name="West A."/>
            <person name="Whitehead S.L."/>
            <person name="Whiteley M.N."/>
            <person name="Wilkinson J.E."/>
            <person name="Willey D.L."/>
            <person name="Williams G."/>
            <person name="Williams L."/>
            <person name="Williamson A."/>
            <person name="Williamson H."/>
            <person name="Wilming L."/>
            <person name="Woodmansey R.L."/>
            <person name="Wray P.W."/>
            <person name="Yen J."/>
            <person name="Zhang J."/>
            <person name="Zhou J."/>
            <person name="Zoghbi H."/>
            <person name="Zorilla S."/>
            <person name="Buck D."/>
            <person name="Reinhardt R."/>
            <person name="Poustka A."/>
            <person name="Rosenthal A."/>
            <person name="Lehrach H."/>
            <person name="Meindl A."/>
            <person name="Minx P.J."/>
            <person name="Hillier L.W."/>
            <person name="Willard H.F."/>
            <person name="Wilson R.K."/>
            <person name="Waterston R.H."/>
            <person name="Rice C.M."/>
            <person name="Vaudin M."/>
            <person name="Coulson A."/>
            <person name="Nelson D.L."/>
            <person name="Weinstock G."/>
            <person name="Sulston J.E."/>
            <person name="Durbin R.M."/>
            <person name="Hubbard T."/>
            <person name="Gibbs R.A."/>
            <person name="Beck S."/>
            <person name="Rogers J."/>
            <person name="Bentley D.R."/>
        </authorList>
    </citation>
    <scope>NUCLEOTIDE SEQUENCE [LARGE SCALE GENOMIC DNA]</scope>
</reference>
<reference key="3">
    <citation type="journal article" date="2004" name="Genome Res.">
        <title>The status, quality, and expansion of the NIH full-length cDNA project: the Mammalian Gene Collection (MGC).</title>
        <authorList>
            <consortium name="The MGC Project Team"/>
        </authorList>
    </citation>
    <scope>NUCLEOTIDE SEQUENCE [LARGE SCALE MRNA] (ISOFORMS 1 AND 2)</scope>
    <source>
        <tissue>Pancreas</tissue>
        <tissue>Testis</tissue>
    </source>
</reference>
<protein>
    <recommendedName>
        <fullName evidence="4">PABIR family member 1</fullName>
    </recommendedName>
</protein>
<gene>
    <name evidence="4" type="primary">PABIR3</name>
    <name type="synonym">FAM122C</name>
</gene>
<feature type="chain" id="PRO_0000254547" description="PABIR family member 1">
    <location>
        <begin position="1"/>
        <end position="195"/>
    </location>
</feature>
<feature type="splice variant" id="VSP_044990" description="In isoform 3." evidence="1">
    <original>M</original>
    <variation>MAYFPGTGRTDQETQLDLSLCGREPESLENLFLDPDM</variation>
    <location>
        <position position="1"/>
    </location>
</feature>
<feature type="splice variant" id="VSP_044991" description="In isoform 3." evidence="1">
    <original>LLPPPPFHGSISRLHQ</original>
    <variation>EITSPTSVEQKPKDLF</variation>
    <location>
        <begin position="64"/>
        <end position="79"/>
    </location>
</feature>
<feature type="splice variant" id="VSP_044992" description="In isoform 3." evidence="1">
    <location>
        <begin position="80"/>
        <end position="195"/>
    </location>
</feature>
<feature type="splice variant" id="VSP_021222" description="In isoform 2." evidence="2">
    <original>VKWHFNINQKRFSKAQPTCFLLILPNCQKIMCIYFQLLLMETTAMLDLLVIRQLKSALSQTLLCHLLILVLICSSRQTFN</original>
    <variation>NDNGLQKSSSLKCIDLTPVSSMASSIKKTGKSTSSYF</variation>
    <location>
        <begin position="116"/>
        <end position="195"/>
    </location>
</feature>
<proteinExistence type="evidence at protein level"/>
<dbReference type="EMBL" id="AK307219">
    <property type="status" value="NOT_ANNOTATED_CDS"/>
    <property type="molecule type" value="mRNA"/>
</dbReference>
<dbReference type="EMBL" id="Z83826">
    <property type="status" value="NOT_ANNOTATED_CDS"/>
    <property type="molecule type" value="Genomic_DNA"/>
</dbReference>
<dbReference type="EMBL" id="AL691477">
    <property type="status" value="NOT_ANNOTATED_CDS"/>
    <property type="molecule type" value="Genomic_DNA"/>
</dbReference>
<dbReference type="EMBL" id="BC017868">
    <property type="protein sequence ID" value="AAH17868.1"/>
    <property type="molecule type" value="mRNA"/>
</dbReference>
<dbReference type="EMBL" id="BC063491">
    <property type="protein sequence ID" value="AAH63491.1"/>
    <property type="molecule type" value="mRNA"/>
</dbReference>
<dbReference type="CCDS" id="CCDS14644.1">
    <molecule id="Q6P4D5-2"/>
</dbReference>
<dbReference type="CCDS" id="CCDS55500.1">
    <molecule id="Q6P4D5-3"/>
</dbReference>
<dbReference type="CCDS" id="CCDS55501.1">
    <molecule id="Q6P4D5-1"/>
</dbReference>
<dbReference type="RefSeq" id="NP_001164250.1">
    <molecule id="Q6P4D5-1"/>
    <property type="nucleotide sequence ID" value="NM_001170779.3"/>
</dbReference>
<dbReference type="RefSeq" id="NP_001164251.1">
    <molecule id="Q6P4D5-3"/>
    <property type="nucleotide sequence ID" value="NM_001170780.3"/>
</dbReference>
<dbReference type="RefSeq" id="NP_001164252.1">
    <property type="nucleotide sequence ID" value="NM_001170781.1"/>
</dbReference>
<dbReference type="RefSeq" id="NP_001164254.1">
    <property type="nucleotide sequence ID" value="NM_001170783.1"/>
</dbReference>
<dbReference type="RefSeq" id="NP_001375369.1">
    <molecule id="Q6P4D5-1"/>
    <property type="nucleotide sequence ID" value="NM_001388440.1"/>
</dbReference>
<dbReference type="RefSeq" id="NP_001375370.1">
    <molecule id="Q6P4D5-3"/>
    <property type="nucleotide sequence ID" value="NM_001388441.1"/>
</dbReference>
<dbReference type="RefSeq" id="NP_001375371.1">
    <molecule id="Q6P4D5-3"/>
    <property type="nucleotide sequence ID" value="NM_001388442.1"/>
</dbReference>
<dbReference type="RefSeq" id="NP_001375372.1">
    <molecule id="Q6P4D5-3"/>
    <property type="nucleotide sequence ID" value="NM_001388443.1"/>
</dbReference>
<dbReference type="RefSeq" id="NP_620174.1">
    <molecule id="Q6P4D5-2"/>
    <property type="nucleotide sequence ID" value="NM_138819.5"/>
</dbReference>
<dbReference type="SMR" id="Q6P4D5"/>
<dbReference type="BioGRID" id="127731">
    <property type="interactions" value="9"/>
</dbReference>
<dbReference type="IntAct" id="Q6P4D5">
    <property type="interactions" value="19"/>
</dbReference>
<dbReference type="STRING" id="9606.ENSP00000359820"/>
<dbReference type="iPTMnet" id="Q6P4D5"/>
<dbReference type="PhosphoSitePlus" id="Q6P4D5"/>
<dbReference type="BioMuta" id="FAM122C"/>
<dbReference type="DMDM" id="74737331"/>
<dbReference type="jPOST" id="Q6P4D5"/>
<dbReference type="MassIVE" id="Q6P4D5"/>
<dbReference type="PaxDb" id="9606-ENSP00000359820"/>
<dbReference type="PeptideAtlas" id="Q6P4D5"/>
<dbReference type="ProteomicsDB" id="25215"/>
<dbReference type="ProteomicsDB" id="66960">
    <molecule id="Q6P4D5-1"/>
</dbReference>
<dbReference type="ProteomicsDB" id="66961">
    <molecule id="Q6P4D5-2"/>
</dbReference>
<dbReference type="Antibodypedia" id="66492">
    <property type="antibodies" value="15 antibodies from 8 providers"/>
</dbReference>
<dbReference type="DNASU" id="159091"/>
<dbReference type="Ensembl" id="ENST00000370784.8">
    <molecule id="Q6P4D5-1"/>
    <property type="protein sequence ID" value="ENSP00000359820.4"/>
    <property type="gene ID" value="ENSG00000156500.16"/>
</dbReference>
<dbReference type="Ensembl" id="ENST00000370785.4">
    <molecule id="Q6P4D5-2"/>
    <property type="protein sequence ID" value="ENSP00000359821.3"/>
    <property type="gene ID" value="ENSG00000156500.16"/>
</dbReference>
<dbReference type="Ensembl" id="ENST00000414371.6">
    <molecule id="Q6P4D5-3"/>
    <property type="protein sequence ID" value="ENSP00000402477.2"/>
    <property type="gene ID" value="ENSG00000156500.16"/>
</dbReference>
<dbReference type="GeneID" id="159091"/>
<dbReference type="KEGG" id="hsa:159091"/>
<dbReference type="UCSC" id="uc004exy.3">
    <molecule id="Q6P4D5-1"/>
    <property type="organism name" value="human"/>
</dbReference>
<dbReference type="AGR" id="HGNC:25202"/>
<dbReference type="CTD" id="159091"/>
<dbReference type="GeneCards" id="PABIR3"/>
<dbReference type="HGNC" id="HGNC:25202">
    <property type="gene designation" value="PABIR3"/>
</dbReference>
<dbReference type="HPA" id="ENSG00000156500">
    <property type="expression patterns" value="Low tissue specificity"/>
</dbReference>
<dbReference type="neXtProt" id="NX_Q6P4D5"/>
<dbReference type="OpenTargets" id="ENSG00000156500"/>
<dbReference type="VEuPathDB" id="HostDB:ENSG00000156500"/>
<dbReference type="eggNOG" id="ENOG502QTCH">
    <property type="taxonomic scope" value="Eukaryota"/>
</dbReference>
<dbReference type="GeneTree" id="ENSGT00390000015476"/>
<dbReference type="HOGENOM" id="CLU_169772_0_0_1"/>
<dbReference type="InParanoid" id="Q6P4D5"/>
<dbReference type="OrthoDB" id="10036177at2759"/>
<dbReference type="PAN-GO" id="Q6P4D5">
    <property type="GO annotations" value="0 GO annotations based on evolutionary models"/>
</dbReference>
<dbReference type="PhylomeDB" id="Q6P4D5"/>
<dbReference type="TreeFam" id="TF330808"/>
<dbReference type="PathwayCommons" id="Q6P4D5"/>
<dbReference type="SignaLink" id="Q6P4D5"/>
<dbReference type="BioGRID-ORCS" id="159091">
    <property type="hits" value="12 hits in 778 CRISPR screens"/>
</dbReference>
<dbReference type="ChiTaRS" id="FAM122C">
    <property type="organism name" value="human"/>
</dbReference>
<dbReference type="GenomeRNAi" id="159091"/>
<dbReference type="Pharos" id="Q6P4D5">
    <property type="development level" value="Tdark"/>
</dbReference>
<dbReference type="PRO" id="PR:Q6P4D5"/>
<dbReference type="Proteomes" id="UP000005640">
    <property type="component" value="Chromosome X"/>
</dbReference>
<dbReference type="RNAct" id="Q6P4D5">
    <property type="molecule type" value="protein"/>
</dbReference>
<dbReference type="Bgee" id="ENSG00000156500">
    <property type="expression patterns" value="Expressed in primordial germ cell in gonad and 113 other cell types or tissues"/>
</dbReference>
<dbReference type="ExpressionAtlas" id="Q6P4D5">
    <property type="expression patterns" value="baseline and differential"/>
</dbReference>
<dbReference type="GO" id="GO:0004865">
    <property type="term" value="F:protein serine/threonine phosphatase inhibitor activity"/>
    <property type="evidence" value="ECO:0007669"/>
    <property type="project" value="InterPro"/>
</dbReference>
<dbReference type="InterPro" id="IPR026716">
    <property type="entry name" value="PBIR1/2/3"/>
</dbReference>
<dbReference type="PANTHER" id="PTHR22227">
    <property type="entry name" value="FAMILY WITH SEQUENCE SIMILARITY 122B ISOFORM X1"/>
    <property type="match status" value="1"/>
</dbReference>
<dbReference type="PANTHER" id="PTHR22227:SF3">
    <property type="entry name" value="PABIR FAMILY MEMBER 1"/>
    <property type="match status" value="1"/>
</dbReference>
<name>PBIR3_HUMAN</name>
<organism>
    <name type="scientific">Homo sapiens</name>
    <name type="common">Human</name>
    <dbReference type="NCBI Taxonomy" id="9606"/>
    <lineage>
        <taxon>Eukaryota</taxon>
        <taxon>Metazoa</taxon>
        <taxon>Chordata</taxon>
        <taxon>Craniata</taxon>
        <taxon>Vertebrata</taxon>
        <taxon>Euteleostomi</taxon>
        <taxon>Mammalia</taxon>
        <taxon>Eutheria</taxon>
        <taxon>Euarchontoglires</taxon>
        <taxon>Primates</taxon>
        <taxon>Haplorrhini</taxon>
        <taxon>Catarrhini</taxon>
        <taxon>Hominidae</taxon>
        <taxon>Homo</taxon>
    </lineage>
</organism>
<accession>Q6P4D5</accession>
<accession>F5H036</accession>
<accession>Q8WVK9</accession>
<comment type="interaction">
    <interactant intactId="EBI-9091052">
        <id>Q6P4D5-2</id>
    </interactant>
    <interactant intactId="EBI-25889034">
        <id>P28288-2</id>
        <label>ABCD3</label>
    </interactant>
    <organismsDiffer>false</organismsDiffer>
    <experiments>3</experiments>
</comment>
<comment type="interaction">
    <interactant intactId="EBI-9091052">
        <id>Q6P4D5-2</id>
    </interactant>
    <interactant intactId="EBI-1049597">
        <id>P27797</id>
        <label>CALR</label>
    </interactant>
    <organismsDiffer>false</organismsDiffer>
    <experiments>3</experiments>
</comment>
<comment type="interaction">
    <interactant intactId="EBI-9091052">
        <id>Q6P4D5-2</id>
    </interactant>
    <interactant intactId="EBI-6875961">
        <id>P02489</id>
        <label>CRYAA</label>
    </interactant>
    <organismsDiffer>false</organismsDiffer>
    <experiments>3</experiments>
</comment>
<comment type="interaction">
    <interactant intactId="EBI-9091052">
        <id>Q6P4D5-2</id>
    </interactant>
    <interactant intactId="EBI-351007">
        <id>P36957</id>
        <label>DLST</label>
    </interactant>
    <organismsDiffer>false</organismsDiffer>
    <experiments>3</experiments>
</comment>
<comment type="interaction">
    <interactant intactId="EBI-9091052">
        <id>Q6P4D5-2</id>
    </interactant>
    <interactant intactId="EBI-357034">
        <id>P25685</id>
        <label>DNAJB1</label>
    </interactant>
    <organismsDiffer>false</organismsDiffer>
    <experiments>3</experiments>
</comment>
<comment type="interaction">
    <interactant intactId="EBI-9091052">
        <id>Q6P4D5-2</id>
    </interactant>
    <interactant intactId="EBI-356015">
        <id>Q14204</id>
        <label>DYNC1H1</label>
    </interactant>
    <organismsDiffer>false</organismsDiffer>
    <experiments>3</experiments>
</comment>
<comment type="interaction">
    <interactant intactId="EBI-9091052">
        <id>Q6P4D5-2</id>
    </interactant>
    <interactant intactId="EBI-2565863">
        <id>P00488</id>
        <label>F13A1</label>
    </interactant>
    <organismsDiffer>false</organismsDiffer>
    <experiments>3</experiments>
</comment>
<comment type="interaction">
    <interactant intactId="EBI-9091052">
        <id>Q6P4D5-2</id>
    </interactant>
    <interactant intactId="EBI-25913156">
        <id>O14908-2</id>
        <label>GIPC1</label>
    </interactant>
    <organismsDiffer>false</organismsDiffer>
    <experiments>3</experiments>
</comment>
<comment type="interaction">
    <interactant intactId="EBI-9091052">
        <id>Q6P4D5-2</id>
    </interactant>
    <interactant intactId="EBI-2432309">
        <id>Q92876</id>
        <label>KLK6</label>
    </interactant>
    <organismsDiffer>false</organismsDiffer>
    <experiments>3</experiments>
</comment>
<comment type="interaction">
    <interactant intactId="EBI-9091052">
        <id>Q6P4D5-2</id>
    </interactant>
    <interactant intactId="EBI-1055945">
        <id>Q8TDX7</id>
        <label>NEK7</label>
    </interactant>
    <organismsDiffer>false</organismsDiffer>
    <experiments>3</experiments>
</comment>
<comment type="interaction">
    <interactant intactId="EBI-9091052">
        <id>Q6P4D5-2</id>
    </interactant>
    <interactant intactId="EBI-1046616">
        <id>P51812</id>
        <label>RPS6KA3</label>
    </interactant>
    <organismsDiffer>false</organismsDiffer>
    <experiments>3</experiments>
</comment>
<comment type="interaction">
    <interactant intactId="EBI-9091052">
        <id>Q6P4D5-2</id>
    </interactant>
    <interactant intactId="EBI-998260">
        <id>P53999</id>
        <label>SUB1</label>
    </interactant>
    <organismsDiffer>false</organismsDiffer>
    <experiments>3</experiments>
</comment>
<comment type="interaction">
    <interactant intactId="EBI-9091052">
        <id>Q6P4D5-2</id>
    </interactant>
    <interactant intactId="EBI-1560194">
        <id>Q15545</id>
        <label>TAF7</label>
    </interactant>
    <organismsDiffer>false</organismsDiffer>
    <experiments>3</experiments>
</comment>
<comment type="alternative products">
    <event type="alternative splicing"/>
    <isoform>
        <id>Q6P4D5-1</id>
        <name>1</name>
        <sequence type="displayed"/>
    </isoform>
    <isoform>
        <id>Q6P4D5-2</id>
        <name>2</name>
        <sequence type="described" ref="VSP_021222"/>
    </isoform>
    <isoform>
        <id>Q6P4D5-3</id>
        <name>3</name>
        <sequence type="described" ref="VSP_044990 VSP_044991 VSP_044992"/>
    </isoform>
</comment>
<comment type="similarity">
    <text evidence="3">Belongs to the FAM122 family.</text>
</comment>
<evidence type="ECO:0000303" key="1">
    <source>
    </source>
</evidence>
<evidence type="ECO:0000303" key="2">
    <source>
    </source>
</evidence>
<evidence type="ECO:0000305" key="3"/>
<evidence type="ECO:0000312" key="4">
    <source>
        <dbReference type="HGNC" id="HGNC:25202"/>
    </source>
</evidence>